<keyword id="KW-0963">Cytoplasm</keyword>
<keyword id="KW-1185">Reference proteome</keyword>
<keyword id="KW-0690">Ribosome biogenesis</keyword>
<proteinExistence type="inferred from homology"/>
<name>RBFA_NITHX</name>
<reference key="1">
    <citation type="submission" date="2006-03" db="EMBL/GenBank/DDBJ databases">
        <title>Complete sequence of chromosome of Nitrobacter hamburgensis X14.</title>
        <authorList>
            <consortium name="US DOE Joint Genome Institute"/>
            <person name="Copeland A."/>
            <person name="Lucas S."/>
            <person name="Lapidus A."/>
            <person name="Barry K."/>
            <person name="Detter J.C."/>
            <person name="Glavina del Rio T."/>
            <person name="Hammon N."/>
            <person name="Israni S."/>
            <person name="Dalin E."/>
            <person name="Tice H."/>
            <person name="Pitluck S."/>
            <person name="Chain P."/>
            <person name="Malfatti S."/>
            <person name="Shin M."/>
            <person name="Vergez L."/>
            <person name="Schmutz J."/>
            <person name="Larimer F."/>
            <person name="Land M."/>
            <person name="Hauser L."/>
            <person name="Kyrpides N."/>
            <person name="Ivanova N."/>
            <person name="Ward B."/>
            <person name="Arp D."/>
            <person name="Klotz M."/>
            <person name="Stein L."/>
            <person name="O'Mullan G."/>
            <person name="Starkenburg S."/>
            <person name="Sayavedra L."/>
            <person name="Poret-Peterson A.T."/>
            <person name="Gentry M.E."/>
            <person name="Bruce D."/>
            <person name="Richardson P."/>
        </authorList>
    </citation>
    <scope>NUCLEOTIDE SEQUENCE [LARGE SCALE GENOMIC DNA]</scope>
    <source>
        <strain>DSM 10229 / NCIMB 13809 / X14</strain>
    </source>
</reference>
<gene>
    <name evidence="1" type="primary">rbfA</name>
    <name type="ordered locus">Nham_0032</name>
</gene>
<feature type="chain" id="PRO_1000000154" description="Ribosome-binding factor A">
    <location>
        <begin position="1"/>
        <end position="137"/>
    </location>
</feature>
<organism>
    <name type="scientific">Nitrobacter hamburgensis (strain DSM 10229 / NCIMB 13809 / X14)</name>
    <dbReference type="NCBI Taxonomy" id="323097"/>
    <lineage>
        <taxon>Bacteria</taxon>
        <taxon>Pseudomonadati</taxon>
        <taxon>Pseudomonadota</taxon>
        <taxon>Alphaproteobacteria</taxon>
        <taxon>Hyphomicrobiales</taxon>
        <taxon>Nitrobacteraceae</taxon>
        <taxon>Nitrobacter</taxon>
    </lineage>
</organism>
<comment type="function">
    <text evidence="1">One of several proteins that assist in the late maturation steps of the functional core of the 30S ribosomal subunit. Associates with free 30S ribosomal subunits (but not with 30S subunits that are part of 70S ribosomes or polysomes). Required for efficient processing of 16S rRNA. May interact with the 5'-terminal helix region of 16S rRNA.</text>
</comment>
<comment type="subunit">
    <text evidence="1">Monomer. Binds 30S ribosomal subunits, but not 50S ribosomal subunits or 70S ribosomes.</text>
</comment>
<comment type="subcellular location">
    <subcellularLocation>
        <location evidence="1">Cytoplasm</location>
    </subcellularLocation>
</comment>
<comment type="similarity">
    <text evidence="1">Belongs to the RbfA family.</text>
</comment>
<evidence type="ECO:0000255" key="1">
    <source>
        <dbReference type="HAMAP-Rule" id="MF_00003"/>
    </source>
</evidence>
<accession>Q1QS63</accession>
<protein>
    <recommendedName>
        <fullName evidence="1">Ribosome-binding factor A</fullName>
    </recommendedName>
</protein>
<sequence>MPRHNKKDSTSGASQRQLRVAETVRHAIADILAQGHVHDPVLEGHLITVPEVRMSADLKLATIYVMPLGGRDTTDVIDALDHNRKFLRGEIARRVNLKFAPDIRFRADERFDEAERIEKLLRTPAVQRDLAPDSDES</sequence>
<dbReference type="EMBL" id="CP000319">
    <property type="protein sequence ID" value="ABE60934.1"/>
    <property type="molecule type" value="Genomic_DNA"/>
</dbReference>
<dbReference type="RefSeq" id="WP_011508641.1">
    <property type="nucleotide sequence ID" value="NC_007964.1"/>
</dbReference>
<dbReference type="SMR" id="Q1QS63"/>
<dbReference type="STRING" id="323097.Nham_0032"/>
<dbReference type="KEGG" id="nha:Nham_0032"/>
<dbReference type="eggNOG" id="COG0858">
    <property type="taxonomic scope" value="Bacteria"/>
</dbReference>
<dbReference type="HOGENOM" id="CLU_089475_1_0_5"/>
<dbReference type="OrthoDB" id="9805051at2"/>
<dbReference type="Proteomes" id="UP000001953">
    <property type="component" value="Chromosome"/>
</dbReference>
<dbReference type="GO" id="GO:0005829">
    <property type="term" value="C:cytosol"/>
    <property type="evidence" value="ECO:0007669"/>
    <property type="project" value="TreeGrafter"/>
</dbReference>
<dbReference type="GO" id="GO:0043024">
    <property type="term" value="F:ribosomal small subunit binding"/>
    <property type="evidence" value="ECO:0007669"/>
    <property type="project" value="TreeGrafter"/>
</dbReference>
<dbReference type="GO" id="GO:0030490">
    <property type="term" value="P:maturation of SSU-rRNA"/>
    <property type="evidence" value="ECO:0007669"/>
    <property type="project" value="UniProtKB-UniRule"/>
</dbReference>
<dbReference type="Gene3D" id="3.30.300.20">
    <property type="match status" value="1"/>
</dbReference>
<dbReference type="HAMAP" id="MF_00003">
    <property type="entry name" value="RbfA"/>
    <property type="match status" value="1"/>
</dbReference>
<dbReference type="InterPro" id="IPR015946">
    <property type="entry name" value="KH_dom-like_a/b"/>
</dbReference>
<dbReference type="InterPro" id="IPR000238">
    <property type="entry name" value="RbfA"/>
</dbReference>
<dbReference type="InterPro" id="IPR023799">
    <property type="entry name" value="RbfA_dom_sf"/>
</dbReference>
<dbReference type="InterPro" id="IPR020053">
    <property type="entry name" value="Ribosome-bd_factorA_CS"/>
</dbReference>
<dbReference type="NCBIfam" id="NF001802">
    <property type="entry name" value="PRK00521.2-5"/>
    <property type="match status" value="1"/>
</dbReference>
<dbReference type="NCBIfam" id="TIGR00082">
    <property type="entry name" value="rbfA"/>
    <property type="match status" value="1"/>
</dbReference>
<dbReference type="PANTHER" id="PTHR33515">
    <property type="entry name" value="RIBOSOME-BINDING FACTOR A, CHLOROPLASTIC-RELATED"/>
    <property type="match status" value="1"/>
</dbReference>
<dbReference type="PANTHER" id="PTHR33515:SF1">
    <property type="entry name" value="RIBOSOME-BINDING FACTOR A, CHLOROPLASTIC-RELATED"/>
    <property type="match status" value="1"/>
</dbReference>
<dbReference type="Pfam" id="PF02033">
    <property type="entry name" value="RBFA"/>
    <property type="match status" value="1"/>
</dbReference>
<dbReference type="SUPFAM" id="SSF89919">
    <property type="entry name" value="Ribosome-binding factor A, RbfA"/>
    <property type="match status" value="1"/>
</dbReference>
<dbReference type="PROSITE" id="PS01319">
    <property type="entry name" value="RBFA"/>
    <property type="match status" value="1"/>
</dbReference>